<protein>
    <recommendedName>
        <fullName evidence="1">Transcription antitermination protein NusB</fullName>
    </recommendedName>
    <alternativeName>
        <fullName evidence="1">Antitermination factor NusB</fullName>
    </alternativeName>
</protein>
<comment type="function">
    <text evidence="1">Involved in transcription antitermination. Required for transcription of ribosomal RNA (rRNA) genes. Binds specifically to the boxA antiterminator sequence of the ribosomal RNA (rrn) operons.</text>
</comment>
<comment type="similarity">
    <text evidence="1">Belongs to the NusB family.</text>
</comment>
<reference key="1">
    <citation type="journal article" date="2006" name="J. Bacteriol.">
        <title>Genome sequence of Aeromonas hydrophila ATCC 7966T: jack of all trades.</title>
        <authorList>
            <person name="Seshadri R."/>
            <person name="Joseph S.W."/>
            <person name="Chopra A.K."/>
            <person name="Sha J."/>
            <person name="Shaw J."/>
            <person name="Graf J."/>
            <person name="Haft D.H."/>
            <person name="Wu M."/>
            <person name="Ren Q."/>
            <person name="Rosovitz M.J."/>
            <person name="Madupu R."/>
            <person name="Tallon L."/>
            <person name="Kim M."/>
            <person name="Jin S."/>
            <person name="Vuong H."/>
            <person name="Stine O.C."/>
            <person name="Ali A."/>
            <person name="Horneman A.J."/>
            <person name="Heidelberg J.F."/>
        </authorList>
    </citation>
    <scope>NUCLEOTIDE SEQUENCE [LARGE SCALE GENOMIC DNA]</scope>
    <source>
        <strain>ATCC 7966 / DSM 30187 / BCRC 13018 / CCUG 14551 / JCM 1027 / KCTC 2358 / NCIMB 9240 / NCTC 8049</strain>
    </source>
</reference>
<name>NUSB_AERHH</name>
<evidence type="ECO:0000255" key="1">
    <source>
        <dbReference type="HAMAP-Rule" id="MF_00073"/>
    </source>
</evidence>
<proteinExistence type="inferred from homology"/>
<accession>A0KNG6</accession>
<keyword id="KW-1185">Reference proteome</keyword>
<keyword id="KW-0694">RNA-binding</keyword>
<keyword id="KW-0804">Transcription</keyword>
<keyword id="KW-0889">Transcription antitermination</keyword>
<keyword id="KW-0805">Transcription regulation</keyword>
<sequence length="137" mass="15751">MKPSERRKARHCATQAIYQWQMTKANVGDIEEQFKIDQDTKGVDLNYFRDLLFGVALHCNELDKVFAPFLSRPLEEVDMVDKAILRLATYELTRRDDVPPRVAINEAIELAKSFAADDSHKFVNGVLDKVIKSLNKR</sequence>
<feature type="chain" id="PRO_1000118104" description="Transcription antitermination protein NusB">
    <location>
        <begin position="1"/>
        <end position="137"/>
    </location>
</feature>
<gene>
    <name evidence="1" type="primary">nusB</name>
    <name type="ordered locus">AHA_3328</name>
</gene>
<dbReference type="EMBL" id="CP000462">
    <property type="protein sequence ID" value="ABK39059.1"/>
    <property type="molecule type" value="Genomic_DNA"/>
</dbReference>
<dbReference type="RefSeq" id="WP_011707095.1">
    <property type="nucleotide sequence ID" value="NC_008570.1"/>
</dbReference>
<dbReference type="RefSeq" id="YP_857817.1">
    <property type="nucleotide sequence ID" value="NC_008570.1"/>
</dbReference>
<dbReference type="SMR" id="A0KNG6"/>
<dbReference type="STRING" id="380703.AHA_3328"/>
<dbReference type="EnsemblBacteria" id="ABK39059">
    <property type="protein sequence ID" value="ABK39059"/>
    <property type="gene ID" value="AHA_3328"/>
</dbReference>
<dbReference type="GeneID" id="4489908"/>
<dbReference type="KEGG" id="aha:AHA_3328"/>
<dbReference type="PATRIC" id="fig|380703.7.peg.3322"/>
<dbReference type="eggNOG" id="COG0781">
    <property type="taxonomic scope" value="Bacteria"/>
</dbReference>
<dbReference type="HOGENOM" id="CLU_087843_4_1_6"/>
<dbReference type="OrthoDB" id="9789556at2"/>
<dbReference type="Proteomes" id="UP000000756">
    <property type="component" value="Chromosome"/>
</dbReference>
<dbReference type="GO" id="GO:0005829">
    <property type="term" value="C:cytosol"/>
    <property type="evidence" value="ECO:0007669"/>
    <property type="project" value="TreeGrafter"/>
</dbReference>
<dbReference type="GO" id="GO:0003723">
    <property type="term" value="F:RNA binding"/>
    <property type="evidence" value="ECO:0007669"/>
    <property type="project" value="UniProtKB-UniRule"/>
</dbReference>
<dbReference type="GO" id="GO:0006353">
    <property type="term" value="P:DNA-templated transcription termination"/>
    <property type="evidence" value="ECO:0007669"/>
    <property type="project" value="UniProtKB-UniRule"/>
</dbReference>
<dbReference type="GO" id="GO:0031564">
    <property type="term" value="P:transcription antitermination"/>
    <property type="evidence" value="ECO:0007669"/>
    <property type="project" value="UniProtKB-KW"/>
</dbReference>
<dbReference type="FunFam" id="1.10.940.10:FF:000001">
    <property type="entry name" value="Transcription antitermination factor NusB"/>
    <property type="match status" value="1"/>
</dbReference>
<dbReference type="Gene3D" id="1.10.940.10">
    <property type="entry name" value="NusB-like"/>
    <property type="match status" value="1"/>
</dbReference>
<dbReference type="HAMAP" id="MF_00073">
    <property type="entry name" value="NusB"/>
    <property type="match status" value="1"/>
</dbReference>
<dbReference type="InterPro" id="IPR035926">
    <property type="entry name" value="NusB-like_sf"/>
</dbReference>
<dbReference type="InterPro" id="IPR011605">
    <property type="entry name" value="NusB_fam"/>
</dbReference>
<dbReference type="InterPro" id="IPR006027">
    <property type="entry name" value="NusB_RsmB_TIM44"/>
</dbReference>
<dbReference type="NCBIfam" id="TIGR01951">
    <property type="entry name" value="nusB"/>
    <property type="match status" value="1"/>
</dbReference>
<dbReference type="PANTHER" id="PTHR11078:SF3">
    <property type="entry name" value="ANTITERMINATION NUSB DOMAIN-CONTAINING PROTEIN"/>
    <property type="match status" value="1"/>
</dbReference>
<dbReference type="PANTHER" id="PTHR11078">
    <property type="entry name" value="N UTILIZATION SUBSTANCE PROTEIN B-RELATED"/>
    <property type="match status" value="1"/>
</dbReference>
<dbReference type="Pfam" id="PF01029">
    <property type="entry name" value="NusB"/>
    <property type="match status" value="1"/>
</dbReference>
<dbReference type="SUPFAM" id="SSF48013">
    <property type="entry name" value="NusB-like"/>
    <property type="match status" value="1"/>
</dbReference>
<organism>
    <name type="scientific">Aeromonas hydrophila subsp. hydrophila (strain ATCC 7966 / DSM 30187 / BCRC 13018 / CCUG 14551 / JCM 1027 / KCTC 2358 / NCIMB 9240 / NCTC 8049)</name>
    <dbReference type="NCBI Taxonomy" id="380703"/>
    <lineage>
        <taxon>Bacteria</taxon>
        <taxon>Pseudomonadati</taxon>
        <taxon>Pseudomonadota</taxon>
        <taxon>Gammaproteobacteria</taxon>
        <taxon>Aeromonadales</taxon>
        <taxon>Aeromonadaceae</taxon>
        <taxon>Aeromonas</taxon>
    </lineage>
</organism>